<feature type="signal peptide" evidence="2">
    <location>
        <begin position="1"/>
        <end position="24"/>
    </location>
</feature>
<feature type="chain" id="PRO_0000045962" description="Inactive ribonuclease-like protein 10">
    <location>
        <begin position="25"/>
        <end position="213"/>
    </location>
</feature>
<feature type="glycosylation site" description="N-linked (GlcNAc...) asparagine" evidence="2">
    <location>
        <position position="131"/>
    </location>
</feature>
<comment type="function">
    <text evidence="1">Secreted proximal epididymal protein required for post-testicular sperm maturation and male fertility. May be involved in sperm adhesion to the egg zona pellucida. Does not have ribonuclease activity (By similarity).</text>
</comment>
<comment type="subcellular location">
    <subcellularLocation>
        <location evidence="1">Secreted</location>
    </subcellularLocation>
</comment>
<comment type="tissue specificity">
    <text evidence="3">Male-specific expression in proximal caput of the epididymis.</text>
</comment>
<comment type="PTM">
    <text evidence="1">The N-terminus is blocked. Glycosylated (By similarity).</text>
</comment>
<comment type="similarity">
    <text evidence="4">Belongs to the pancreatic ribonuclease family.</text>
</comment>
<keyword id="KW-0130">Cell adhesion</keyword>
<keyword id="KW-0278">Fertilization</keyword>
<keyword id="KW-0325">Glycoprotein</keyword>
<keyword id="KW-1185">Reference proteome</keyword>
<keyword id="KW-0964">Secreted</keyword>
<keyword id="KW-0732">Signal</keyword>
<organism>
    <name type="scientific">Equus caballus</name>
    <name type="common">Horse</name>
    <dbReference type="NCBI Taxonomy" id="9796"/>
    <lineage>
        <taxon>Eukaryota</taxon>
        <taxon>Metazoa</taxon>
        <taxon>Chordata</taxon>
        <taxon>Craniata</taxon>
        <taxon>Vertebrata</taxon>
        <taxon>Euteleostomi</taxon>
        <taxon>Mammalia</taxon>
        <taxon>Eutheria</taxon>
        <taxon>Laurasiatheria</taxon>
        <taxon>Perissodactyla</taxon>
        <taxon>Equidae</taxon>
        <taxon>Equus</taxon>
    </lineage>
</organism>
<accession>Q70IB3</accession>
<accession>F6VMI8</accession>
<evidence type="ECO:0000250" key="1"/>
<evidence type="ECO:0000255" key="2"/>
<evidence type="ECO:0000269" key="3">
    <source>
    </source>
</evidence>
<evidence type="ECO:0000305" key="4"/>
<sequence length="213" mass="23942">MKLTLVQIFFMMLLLLLGLGMGLGLGLQMAAAVLEDSDQSLNDFWSSDSQEKAETTKEGDGTRTTETLLLSNKGVVQPVWPEETILAEDEVGGNKMLRADALFQSDKDYLRLDLMNRECNSLMAHKVKKRNHTCIPEYTFIHEELDTVKAVCKNPVVACDLKGAKCHKSSRPFDLTFCKLSKPGQVTPHCNYLTFIFEKFIIISCNDMKVKIT</sequence>
<dbReference type="EMBL" id="AAWR02001632">
    <property type="status" value="NOT_ANNOTATED_CDS"/>
    <property type="molecule type" value="Genomic_DNA"/>
</dbReference>
<dbReference type="EMBL" id="AJ580632">
    <property type="protein sequence ID" value="CAE45264.1"/>
    <property type="molecule type" value="mRNA"/>
</dbReference>
<dbReference type="RefSeq" id="NP_001157459.1">
    <property type="nucleotide sequence ID" value="NM_001163987.1"/>
</dbReference>
<dbReference type="RefSeq" id="XP_014588929.1">
    <property type="nucleotide sequence ID" value="XM_014733443.3"/>
</dbReference>
<dbReference type="SMR" id="Q70IB3"/>
<dbReference type="FunCoup" id="Q70IB3">
    <property type="interactions" value="2"/>
</dbReference>
<dbReference type="STRING" id="9796.ENSECAP00000001027"/>
<dbReference type="GlyCosmos" id="Q70IB3">
    <property type="glycosylation" value="1 site, No reported glycans"/>
</dbReference>
<dbReference type="PaxDb" id="9796-ENSECAP00000001027"/>
<dbReference type="Ensembl" id="ENSECAT00000001324.3">
    <property type="protein sequence ID" value="ENSECAP00000001027.1"/>
    <property type="gene ID" value="ENSECAG00000001454.3"/>
</dbReference>
<dbReference type="Ensembl" id="ENSECAT00000098034.1">
    <property type="protein sequence ID" value="ENSECAP00000072752.1"/>
    <property type="gene ID" value="ENSECAG00000001454.3"/>
</dbReference>
<dbReference type="GeneID" id="100033972"/>
<dbReference type="KEGG" id="ecb:100033972"/>
<dbReference type="CTD" id="338879"/>
<dbReference type="GeneTree" id="ENSGT00730000111443"/>
<dbReference type="HOGENOM" id="CLU_1280301_0_0_1"/>
<dbReference type="InParanoid" id="Q70IB3"/>
<dbReference type="OMA" id="GQVTPHC"/>
<dbReference type="OrthoDB" id="9830114at2759"/>
<dbReference type="TreeFam" id="TF337410"/>
<dbReference type="Proteomes" id="UP000002281">
    <property type="component" value="Chromosome 1"/>
</dbReference>
<dbReference type="Bgee" id="ENSECAG00000001454">
    <property type="expression patterns" value="Expressed in oviduct epithelium and 10 other cell types or tissues"/>
</dbReference>
<dbReference type="ExpressionAtlas" id="Q70IB3">
    <property type="expression patterns" value="baseline"/>
</dbReference>
<dbReference type="GO" id="GO:0005576">
    <property type="term" value="C:extracellular region"/>
    <property type="evidence" value="ECO:0007669"/>
    <property type="project" value="UniProtKB-SubCell"/>
</dbReference>
<dbReference type="GO" id="GO:0003676">
    <property type="term" value="F:nucleic acid binding"/>
    <property type="evidence" value="ECO:0007669"/>
    <property type="project" value="InterPro"/>
</dbReference>
<dbReference type="GO" id="GO:0050830">
    <property type="term" value="P:defense response to Gram-positive bacterium"/>
    <property type="evidence" value="ECO:0000318"/>
    <property type="project" value="GO_Central"/>
</dbReference>
<dbReference type="GO" id="GO:0034113">
    <property type="term" value="P:heterotypic cell-cell adhesion"/>
    <property type="evidence" value="ECO:0000250"/>
    <property type="project" value="UniProtKB"/>
</dbReference>
<dbReference type="GO" id="GO:0022409">
    <property type="term" value="P:positive regulation of cell-cell adhesion"/>
    <property type="evidence" value="ECO:0000250"/>
    <property type="project" value="UniProtKB"/>
</dbReference>
<dbReference type="GO" id="GO:1902093">
    <property type="term" value="P:positive regulation of flagellated sperm motility"/>
    <property type="evidence" value="ECO:0000250"/>
    <property type="project" value="UniProtKB"/>
</dbReference>
<dbReference type="GO" id="GO:0080154">
    <property type="term" value="P:regulation of fertilization"/>
    <property type="evidence" value="ECO:0000250"/>
    <property type="project" value="UniProtKB"/>
</dbReference>
<dbReference type="GO" id="GO:0007338">
    <property type="term" value="P:single fertilization"/>
    <property type="evidence" value="ECO:0007669"/>
    <property type="project" value="UniProtKB-KW"/>
</dbReference>
<dbReference type="CDD" id="cd00163">
    <property type="entry name" value="RNase_A"/>
    <property type="match status" value="1"/>
</dbReference>
<dbReference type="FunFam" id="3.10.130.10:FF:000002">
    <property type="entry name" value="Inactive ribonuclease-like protein 10"/>
    <property type="match status" value="1"/>
</dbReference>
<dbReference type="Gene3D" id="3.10.130.10">
    <property type="entry name" value="Ribonuclease A-like domain"/>
    <property type="match status" value="1"/>
</dbReference>
<dbReference type="InterPro" id="IPR001427">
    <property type="entry name" value="RNaseA"/>
</dbReference>
<dbReference type="InterPro" id="IPR036816">
    <property type="entry name" value="RNaseA-like_dom_sf"/>
</dbReference>
<dbReference type="InterPro" id="IPR023412">
    <property type="entry name" value="RNaseA_domain"/>
</dbReference>
<dbReference type="PANTHER" id="PTHR11437:SF63">
    <property type="entry name" value="INACTIVE RIBONUCLEASE-LIKE PROTEIN 10"/>
    <property type="match status" value="1"/>
</dbReference>
<dbReference type="PANTHER" id="PTHR11437">
    <property type="entry name" value="RIBONUCLEASE"/>
    <property type="match status" value="1"/>
</dbReference>
<dbReference type="Pfam" id="PF00074">
    <property type="entry name" value="RnaseA"/>
    <property type="match status" value="1"/>
</dbReference>
<dbReference type="PRINTS" id="PR00794">
    <property type="entry name" value="RIBONUCLEASE"/>
</dbReference>
<dbReference type="SMART" id="SM00092">
    <property type="entry name" value="RNAse_Pc"/>
    <property type="match status" value="1"/>
</dbReference>
<dbReference type="SUPFAM" id="SSF54076">
    <property type="entry name" value="RNase A-like"/>
    <property type="match status" value="1"/>
</dbReference>
<reference key="1">
    <citation type="journal article" date="2009" name="Science">
        <title>Genome sequence, comparative analysis, and population genetics of the domestic horse.</title>
        <authorList>
            <person name="Wade C.M."/>
            <person name="Giulotto E."/>
            <person name="Sigurdsson S."/>
            <person name="Zoli M."/>
            <person name="Gnerre S."/>
            <person name="Imsland F."/>
            <person name="Lear T.L."/>
            <person name="Adelson D.L."/>
            <person name="Bailey E."/>
            <person name="Bellone R.R."/>
            <person name="Bloecker H."/>
            <person name="Distl O."/>
            <person name="Edgar R.C."/>
            <person name="Garber M."/>
            <person name="Leeb T."/>
            <person name="Mauceli E."/>
            <person name="MacLeod J.N."/>
            <person name="Penedo M.C.T."/>
            <person name="Raison J.M."/>
            <person name="Sharpe T."/>
            <person name="Vogel J."/>
            <person name="Andersson L."/>
            <person name="Antczak D.F."/>
            <person name="Biagi T."/>
            <person name="Binns M.M."/>
            <person name="Chowdhary B.P."/>
            <person name="Coleman S.J."/>
            <person name="Della Valle G."/>
            <person name="Fryc S."/>
            <person name="Guerin G."/>
            <person name="Hasegawa T."/>
            <person name="Hill E.W."/>
            <person name="Jurka J."/>
            <person name="Kiialainen A."/>
            <person name="Lindgren G."/>
            <person name="Liu J."/>
            <person name="Magnani E."/>
            <person name="Mickelson J.R."/>
            <person name="Murray J."/>
            <person name="Nergadze S.G."/>
            <person name="Onofrio R."/>
            <person name="Pedroni S."/>
            <person name="Piras M.F."/>
            <person name="Raudsepp T."/>
            <person name="Rocchi M."/>
            <person name="Roeed K.H."/>
            <person name="Ryder O.A."/>
            <person name="Searle S."/>
            <person name="Skow L."/>
            <person name="Swinburne J.E."/>
            <person name="Syvaenen A.C."/>
            <person name="Tozaki T."/>
            <person name="Valberg S.J."/>
            <person name="Vaudin M."/>
            <person name="White J.R."/>
            <person name="Zody M.C."/>
            <person name="Lander E.S."/>
            <person name="Lindblad-Toh K."/>
        </authorList>
    </citation>
    <scope>NUCLEOTIDE SEQUENCE [LARGE SCALE GENOMIC DNA]</scope>
    <source>
        <strain>Thoroughbred</strain>
    </source>
</reference>
<reference key="2">
    <citation type="journal article" date="2004" name="Biol. Reprod.">
        <title>Identification of a member of a new RNase A family specifically secreted by epididymal caput epithelium.</title>
        <authorList>
            <person name="Castella S."/>
            <person name="Fouchecourt S."/>
            <person name="Teixeira-Gomes A.P."/>
            <person name="Vinh J."/>
            <person name="Belghazi M."/>
            <person name="Dacheux F."/>
            <person name="Dacheux J.-L."/>
        </authorList>
    </citation>
    <scope>NUCLEOTIDE SEQUENCE [MRNA] OF 1-165</scope>
    <scope>TISSUE SPECIFICITY</scope>
    <source>
        <tissue>Epididymis</tissue>
    </source>
</reference>
<protein>
    <recommendedName>
        <fullName>Inactive ribonuclease-like protein 10</fullName>
    </recommendedName>
    <alternativeName>
        <fullName>Protein Train A</fullName>
    </alternativeName>
</protein>
<name>RNS10_HORSE</name>
<gene>
    <name type="primary">RNASE10</name>
</gene>
<proteinExistence type="evidence at transcript level"/>